<gene>
    <name type="primary">pheM</name>
    <name type="ordered locus">Z2744</name>
    <name type="ordered locus">ECs2422</name>
</gene>
<organism>
    <name type="scientific">Escherichia coli O157:H7</name>
    <dbReference type="NCBI Taxonomy" id="83334"/>
    <lineage>
        <taxon>Bacteria</taxon>
        <taxon>Pseudomonadati</taxon>
        <taxon>Pseudomonadota</taxon>
        <taxon>Gammaproteobacteria</taxon>
        <taxon>Enterobacterales</taxon>
        <taxon>Enterobacteriaceae</taxon>
        <taxon>Escherichia</taxon>
    </lineage>
</organism>
<sequence length="14" mass="1762">MNAAIFRFFFYFST</sequence>
<dbReference type="EMBL" id="AE005174">
    <property type="protein sequence ID" value="AAG56702.1"/>
    <property type="molecule type" value="Genomic_DNA"/>
</dbReference>
<dbReference type="EMBL" id="BA000007">
    <property type="protein sequence ID" value="BAB35845.1"/>
    <property type="molecule type" value="Genomic_DNA"/>
</dbReference>
<dbReference type="PIR" id="B85780">
    <property type="entry name" value="B85780"/>
</dbReference>
<dbReference type="PIR" id="F90931">
    <property type="entry name" value="F90931"/>
</dbReference>
<dbReference type="RefSeq" id="WP_001386830.1">
    <property type="nucleotide sequence ID" value="NZ_VOAI01000007.1"/>
</dbReference>
<dbReference type="GeneID" id="98388756"/>
<dbReference type="KEGG" id="ece:Z2744"/>
<dbReference type="HOGENOM" id="CLU_222433_0_0_6"/>
<dbReference type="Proteomes" id="UP000000558">
    <property type="component" value="Chromosome"/>
</dbReference>
<dbReference type="Proteomes" id="UP000002519">
    <property type="component" value="Chromosome"/>
</dbReference>
<dbReference type="InterPro" id="IPR049616">
    <property type="entry name" value="PheM"/>
</dbReference>
<dbReference type="NCBIfam" id="NF033686">
    <property type="entry name" value="leader_PheM_1"/>
    <property type="match status" value="1"/>
</dbReference>
<proteinExistence type="predicted"/>
<accession>P0AD76</accession>
<accession>P06985</accession>
<name>LPF2_ECO57</name>
<feature type="peptide" id="PRO_0000043982" description="Phenylalanyl--tRNA ligase operon leader peptide">
    <location>
        <begin position="1"/>
        <end position="14"/>
    </location>
</feature>
<keyword id="KW-0428">Leader peptide</keyword>
<keyword id="KW-1185">Reference proteome</keyword>
<protein>
    <recommendedName>
        <fullName>Phenylalanyl--tRNA ligase operon leader peptide</fullName>
    </recommendedName>
    <alternativeName>
        <fullName>pheST attenuator peptide</fullName>
    </alternativeName>
</protein>
<reference key="1">
    <citation type="journal article" date="2001" name="Nature">
        <title>Genome sequence of enterohaemorrhagic Escherichia coli O157:H7.</title>
        <authorList>
            <person name="Perna N.T."/>
            <person name="Plunkett G. III"/>
            <person name="Burland V."/>
            <person name="Mau B."/>
            <person name="Glasner J.D."/>
            <person name="Rose D.J."/>
            <person name="Mayhew G.F."/>
            <person name="Evans P.S."/>
            <person name="Gregor J."/>
            <person name="Kirkpatrick H.A."/>
            <person name="Posfai G."/>
            <person name="Hackett J."/>
            <person name="Klink S."/>
            <person name="Boutin A."/>
            <person name="Shao Y."/>
            <person name="Miller L."/>
            <person name="Grotbeck E.J."/>
            <person name="Davis N.W."/>
            <person name="Lim A."/>
            <person name="Dimalanta E.T."/>
            <person name="Potamousis K."/>
            <person name="Apodaca J."/>
            <person name="Anantharaman T.S."/>
            <person name="Lin J."/>
            <person name="Yen G."/>
            <person name="Schwartz D.C."/>
            <person name="Welch R.A."/>
            <person name="Blattner F.R."/>
        </authorList>
    </citation>
    <scope>NUCLEOTIDE SEQUENCE [LARGE SCALE GENOMIC DNA]</scope>
    <source>
        <strain>O157:H7 / EDL933 / ATCC 700927 / EHEC</strain>
    </source>
</reference>
<reference key="2">
    <citation type="journal article" date="2001" name="DNA Res.">
        <title>Complete genome sequence of enterohemorrhagic Escherichia coli O157:H7 and genomic comparison with a laboratory strain K-12.</title>
        <authorList>
            <person name="Hayashi T."/>
            <person name="Makino K."/>
            <person name="Ohnishi M."/>
            <person name="Kurokawa K."/>
            <person name="Ishii K."/>
            <person name="Yokoyama K."/>
            <person name="Han C.-G."/>
            <person name="Ohtsubo E."/>
            <person name="Nakayama K."/>
            <person name="Murata T."/>
            <person name="Tanaka M."/>
            <person name="Tobe T."/>
            <person name="Iida T."/>
            <person name="Takami H."/>
            <person name="Honda T."/>
            <person name="Sasakawa C."/>
            <person name="Ogasawara N."/>
            <person name="Yasunaga T."/>
            <person name="Kuhara S."/>
            <person name="Shiba T."/>
            <person name="Hattori M."/>
            <person name="Shinagawa H."/>
        </authorList>
    </citation>
    <scope>NUCLEOTIDE SEQUENCE [LARGE SCALE GENOMIC DNA]</scope>
    <source>
        <strain>O157:H7 / Sakai / RIMD 0509952 / EHEC</strain>
    </source>
</reference>